<organism>
    <name type="scientific">Trichoderma asperellum (strain ATCC 204424 / CBS 433.97 / NBRC 101777)</name>
    <dbReference type="NCBI Taxonomy" id="1042311"/>
    <lineage>
        <taxon>Eukaryota</taxon>
        <taxon>Fungi</taxon>
        <taxon>Dikarya</taxon>
        <taxon>Ascomycota</taxon>
        <taxon>Pezizomycotina</taxon>
        <taxon>Sordariomycetes</taxon>
        <taxon>Hypocreomycetidae</taxon>
        <taxon>Hypocreales</taxon>
        <taxon>Hypocreaceae</taxon>
        <taxon>Trichoderma</taxon>
    </lineage>
</organism>
<feature type="signal peptide" evidence="2">
    <location>
        <begin position="1"/>
        <end position="16"/>
    </location>
</feature>
<feature type="chain" id="PRO_5015550632" description="Class II hydrophobin 6">
    <location>
        <begin position="17"/>
        <end position="106"/>
    </location>
</feature>
<feature type="disulfide bond" evidence="1">
    <location>
        <begin position="36"/>
        <end position="86"/>
    </location>
</feature>
<feature type="disulfide bond" evidence="1">
    <location>
        <begin position="47"/>
        <end position="77"/>
    </location>
</feature>
<feature type="disulfide bond" evidence="1">
    <location>
        <begin position="48"/>
        <end position="60"/>
    </location>
</feature>
<feature type="disulfide bond" evidence="1">
    <location>
        <begin position="87"/>
        <end position="98"/>
    </location>
</feature>
<dbReference type="EMBL" id="KZ679261">
    <property type="protein sequence ID" value="PTB41791.1"/>
    <property type="molecule type" value="Genomic_DNA"/>
</dbReference>
<dbReference type="STRING" id="1042311.A0A2T3ZAF2"/>
<dbReference type="OrthoDB" id="4500971at2759"/>
<dbReference type="Proteomes" id="UP000240493">
    <property type="component" value="Unassembled WGS sequence"/>
</dbReference>
<dbReference type="GO" id="GO:0005576">
    <property type="term" value="C:extracellular region"/>
    <property type="evidence" value="ECO:0007669"/>
    <property type="project" value="UniProtKB-KW"/>
</dbReference>
<dbReference type="CDD" id="cd23508">
    <property type="entry name" value="hydrophobin_II"/>
    <property type="match status" value="1"/>
</dbReference>
<dbReference type="Gene3D" id="3.20.120.10">
    <property type="entry name" value="Hydrophobin"/>
    <property type="match status" value="1"/>
</dbReference>
<dbReference type="InterPro" id="IPR010636">
    <property type="entry name" value="Cerato-ulmin_hydrophobin"/>
</dbReference>
<dbReference type="InterPro" id="IPR036686">
    <property type="entry name" value="Hydrophobin_sf"/>
</dbReference>
<dbReference type="PANTHER" id="PTHR42341">
    <property type="entry name" value="HYDROPHOBIN"/>
    <property type="match status" value="1"/>
</dbReference>
<dbReference type="PANTHER" id="PTHR42341:SF1">
    <property type="entry name" value="HYDROPHOBIN"/>
    <property type="match status" value="1"/>
</dbReference>
<dbReference type="Pfam" id="PF06766">
    <property type="entry name" value="Hydrophobin_2"/>
    <property type="match status" value="1"/>
</dbReference>
<dbReference type="SUPFAM" id="SSF101751">
    <property type="entry name" value="Hydrophobin II, HfbII"/>
    <property type="match status" value="1"/>
</dbReference>
<proteinExistence type="evidence at transcript level"/>
<evidence type="ECO:0000250" key="1">
    <source>
        <dbReference type="UniProtKB" id="P79073"/>
    </source>
</evidence>
<evidence type="ECO:0000255" key="2"/>
<evidence type="ECO:0000269" key="3">
    <source>
    </source>
</evidence>
<evidence type="ECO:0000303" key="4">
    <source>
    </source>
</evidence>
<evidence type="ECO:0000305" key="5"/>
<reference key="1">
    <citation type="submission" date="2016-07" db="EMBL/GenBank/DDBJ databases">
        <title>Multiple horizontal gene transfer events from other fungi enriched the ability of initially mycotrophic Trichoderma (Ascomycota) to feed on dead plant biomass.</title>
        <authorList>
            <consortium name="DOE Joint Genome Institute"/>
            <person name="Aerts A."/>
            <person name="Atanasova L."/>
            <person name="Chenthamara K."/>
            <person name="Zhang J."/>
            <person name="Grujic M."/>
            <person name="Henrissat B."/>
            <person name="Kuo A."/>
            <person name="Salamov A."/>
            <person name="Lipzen A."/>
            <person name="Labutti K."/>
            <person name="Barry K."/>
            <person name="Miao Y."/>
            <person name="Rahimi M.J."/>
            <person name="Shen Q."/>
            <person name="Grigoriev I.V."/>
            <person name="Kubicek C.P."/>
            <person name="Druzhinina I.S."/>
        </authorList>
    </citation>
    <scope>NUCLEOTIDE SEQUENCE [LARGE SCALE GENOMIC DNA]</scope>
    <source>
        <strain>ATCC 204424 / CBS 433.97 / NBRC 101777</strain>
    </source>
</reference>
<reference key="2">
    <citation type="journal article" date="2015" name="Microbiol. Res.">
        <title>Functional analysis of the class II hydrophobin gene HFB2-6 from the biocontrol agent Trichoderma asperellum ACCC30536.</title>
        <authorList>
            <person name="Huang Y."/>
            <person name="Mijiti G."/>
            <person name="Wang Z."/>
            <person name="Yu W."/>
            <person name="Fan H."/>
            <person name="Zhang R."/>
            <person name="Liu Z."/>
        </authorList>
    </citation>
    <scope>FUNCTION</scope>
    <scope>INDUCTION</scope>
</reference>
<name>HFB26_TRIA4</name>
<gene>
    <name evidence="4" type="primary">HFB2-6</name>
    <name type="ORF">M441DRAFT_57894</name>
</gene>
<protein>
    <recommendedName>
        <fullName evidence="4">Class II hydrophobin 6</fullName>
    </recommendedName>
</protein>
<keyword id="KW-0134">Cell wall</keyword>
<keyword id="KW-1015">Disulfide bond</keyword>
<keyword id="KW-1185">Reference proteome</keyword>
<keyword id="KW-0964">Secreted</keyword>
<keyword id="KW-0732">Signal</keyword>
<accession>A0A2T3ZAF2</accession>
<sequence length="106" mass="10876">MQFFTVATLFLATAFAAPSVDTNGNGIAPRLAANFCPPGLLYSNPQCCQIDVLGVADLDCVSPPSGPSKCKTFAGICDKIGRQPKCCVVPVAGQALLCTDPVGANN</sequence>
<comment type="function">
    <text evidence="3 5">Aerial growth, conidiation, and dispersal of filamentous fungi in the environment rely upon a capability of their secreting small amphipathic proteins called hydrophobins (HPBs) with low sequence identity. Class I can self-assemble into an outermost layer of rodlet bundles on aerial cell surfaces, conferring cellular hydrophobicity that supports fungal growth, development and dispersal; whereas Class II form highly ordered films at water-air interfaces through intermolecular interactions but contribute nothing to the rodlet structure (Probable). HFB2-6 is a class II hydrophobin that has a function in root colonization (PubMed:25644947). Acts as an effector in poplar by up-regulating the expression of genes related to both the jasmonic acid and salicylic acid signal transduction pathways, which not only causes induced systemic resistance (ISR), but also systemic acquired resistance (SAR), giving poplar broad-spectrum resistance to pathogens (PubMed:25644947). Also induces genes related to auxin signal transduction to promote poplar growth (PubMed:25644947). Plays roles in interactions with both biotic and abiotic environmental conditions such as the presence of the pathogen Alternaria alternata or nutrient starvation conditions (PubMed:25644947).</text>
</comment>
<comment type="subunit">
    <text evidence="1">Homodimer (By similarity). Homodimers further self-assemble to form highly ordered films at water-air interfaces through intermolecular interactions (By similarity).</text>
</comment>
<comment type="subcellular location">
    <subcellularLocation>
        <location evidence="1">Secreted</location>
    </subcellularLocation>
    <subcellularLocation>
        <location evidence="1">Secreted</location>
        <location evidence="1">Cell wall</location>
    </subcellularLocation>
</comment>
<comment type="induction">
    <text evidence="3">Expression is up-regulated under Alternaria alternata cell wall and Alternaria alternata fermentation liquid treatments (PubMed:25644947). Expression is also up-regulated under nutritional stress conditions (PubMed:25644947). Expression is down-regulated in the presence of poplar leaf powder but up-regulated in the presence of poplar root powder (PubMed:25644947).</text>
</comment>
<comment type="similarity">
    <text evidence="5">Belongs to the cerato-ulmin hydrophobin family.</text>
</comment>